<sequence>MKKRWSIVTLMLIFTLVLSACGFGGTGSNGEGKKDSKGKTTLNINIKTEPFSLHPGLANDSVSGGVIRQTFEGLTRINADGEPEEGMASKIETSKDGKTYTFTIRDGVKWSNGDPVTAQDFEYAWKWALDPNNESQYAYQLYYIKGAEAANTGKGSLDDVAVKAVNDKTLKVELNNPTPYFTELTAFYTYMPINEKIAEKNKKWNTNAGDDYVSNGPFKMTAWKHSGSITLEKNDQYWDKDKVKLKKIDMVMINNNNTELKKFQAGELDWAGMPLGQLPTESLPTLKKDGSLHVEPIAGVYWYKFNTEAKPLDNVNIRKALTYSLDRQSIVKNVTQGEQMPAMAAVPPTMKGFEDNKEGYFKDNDVKTAKEYLEKGLKEMGLSKASDLPKIKLSYNTDDAHAKIAQAVQEMWKKNLGVDVELDNSEWNVYIDKLHSQDYQIGRMGWLGDFNDPINFLELFRDKNGGNNDTGWENPEFKKLLNQSQTETDKTKRAELLKKAEGIFIDEMPVAPIYFYTDTWVQDENLKGVIMPGTGEVYFRNAYFK</sequence>
<feature type="signal peptide" evidence="1">
    <location>
        <begin position="1"/>
        <end position="20"/>
    </location>
</feature>
<feature type="chain" id="PRO_0000031793" description="Oligopeptide-binding protein OppA">
    <location>
        <begin position="21"/>
        <end position="545"/>
    </location>
</feature>
<feature type="modified residue" description="Phosphothreonine" evidence="3">
    <location>
        <position position="470"/>
    </location>
</feature>
<feature type="lipid moiety-binding region" description="N-palmitoyl cysteine" evidence="1">
    <location>
        <position position="21"/>
    </location>
</feature>
<feature type="lipid moiety-binding region" description="S-diacylglycerol cysteine" evidence="1">
    <location>
        <position position="21"/>
    </location>
</feature>
<feature type="sequence conflict" description="In Ref. 2; AAA62687/CAB13000." evidence="13" ref="2">
    <original>T</original>
    <variation>S</variation>
    <location>
        <position position="26"/>
    </location>
</feature>
<feature type="sequence conflict" description="In Ref. 2; AAA62687/CAB13000." evidence="13" ref="2">
    <original>E</original>
    <variation>K</variation>
    <location>
        <position position="195"/>
    </location>
</feature>
<feature type="sequence conflict" description="In Ref. 2; AAA62687/CAB13000." evidence="13" ref="2">
    <original>M</original>
    <variation>I</variation>
    <location>
        <position position="340"/>
    </location>
</feature>
<feature type="strand" evidence="19">
    <location>
        <begin position="41"/>
        <end position="45"/>
    </location>
</feature>
<feature type="turn" evidence="19">
    <location>
        <begin position="55"/>
        <end position="57"/>
    </location>
</feature>
<feature type="helix" evidence="19">
    <location>
        <begin position="61"/>
        <end position="70"/>
    </location>
</feature>
<feature type="strand" evidence="19">
    <location>
        <begin position="74"/>
        <end position="77"/>
    </location>
</feature>
<feature type="strand" evidence="19">
    <location>
        <begin position="83"/>
        <end position="93"/>
    </location>
</feature>
<feature type="strand" evidence="19">
    <location>
        <begin position="99"/>
        <end position="104"/>
    </location>
</feature>
<feature type="helix" evidence="19">
    <location>
        <begin position="118"/>
        <end position="129"/>
    </location>
</feature>
<feature type="helix" evidence="19">
    <location>
        <begin position="131"/>
        <end position="133"/>
    </location>
</feature>
<feature type="helix" evidence="19">
    <location>
        <begin position="138"/>
        <end position="141"/>
    </location>
</feature>
<feature type="helix" evidence="19">
    <location>
        <begin position="147"/>
        <end position="151"/>
    </location>
</feature>
<feature type="helix" evidence="19">
    <location>
        <begin position="157"/>
        <end position="159"/>
    </location>
</feature>
<feature type="strand" evidence="19">
    <location>
        <begin position="160"/>
        <end position="166"/>
    </location>
</feature>
<feature type="strand" evidence="19">
    <location>
        <begin position="169"/>
        <end position="176"/>
    </location>
</feature>
<feature type="helix" evidence="19">
    <location>
        <begin position="181"/>
        <end position="184"/>
    </location>
</feature>
<feature type="helix" evidence="19">
    <location>
        <begin position="188"/>
        <end position="190"/>
    </location>
</feature>
<feature type="helix" evidence="19">
    <location>
        <begin position="195"/>
        <end position="200"/>
    </location>
</feature>
<feature type="helix" evidence="19">
    <location>
        <begin position="204"/>
        <end position="206"/>
    </location>
</feature>
<feature type="strand" evidence="19">
    <location>
        <begin position="207"/>
        <end position="209"/>
    </location>
</feature>
<feature type="strand" evidence="19">
    <location>
        <begin position="216"/>
        <end position="224"/>
    </location>
</feature>
<feature type="turn" evidence="19">
    <location>
        <begin position="225"/>
        <end position="227"/>
    </location>
</feature>
<feature type="strand" evidence="19">
    <location>
        <begin position="228"/>
        <end position="233"/>
    </location>
</feature>
<feature type="helix" evidence="19">
    <location>
        <begin position="240"/>
        <end position="242"/>
    </location>
</feature>
<feature type="strand" evidence="19">
    <location>
        <begin position="246"/>
        <end position="251"/>
    </location>
</feature>
<feature type="helix" evidence="19">
    <location>
        <begin position="256"/>
        <end position="264"/>
    </location>
</feature>
<feature type="strand" evidence="19">
    <location>
        <begin position="269"/>
        <end position="272"/>
    </location>
</feature>
<feature type="turn" evidence="19">
    <location>
        <begin position="273"/>
        <end position="275"/>
    </location>
</feature>
<feature type="helix" evidence="19">
    <location>
        <begin position="280"/>
        <end position="282"/>
    </location>
</feature>
<feature type="helix" evidence="19">
    <location>
        <begin position="283"/>
        <end position="288"/>
    </location>
</feature>
<feature type="strand" evidence="19">
    <location>
        <begin position="293"/>
        <end position="305"/>
    </location>
</feature>
<feature type="turn" evidence="19">
    <location>
        <begin position="310"/>
        <end position="313"/>
    </location>
</feature>
<feature type="helix" evidence="19">
    <location>
        <begin position="315"/>
        <end position="323"/>
    </location>
</feature>
<feature type="helix" evidence="19">
    <location>
        <begin position="327"/>
        <end position="333"/>
    </location>
</feature>
<feature type="strand" evidence="19">
    <location>
        <begin position="343"/>
        <end position="346"/>
    </location>
</feature>
<feature type="helix" evidence="19">
    <location>
        <begin position="354"/>
        <end position="357"/>
    </location>
</feature>
<feature type="helix" evidence="19">
    <location>
        <begin position="366"/>
        <end position="380"/>
    </location>
</feature>
<feature type="helix" evidence="19">
    <location>
        <begin position="385"/>
        <end position="387"/>
    </location>
</feature>
<feature type="strand" evidence="19">
    <location>
        <begin position="391"/>
        <end position="397"/>
    </location>
</feature>
<feature type="helix" evidence="19">
    <location>
        <begin position="399"/>
        <end position="416"/>
    </location>
</feature>
<feature type="strand" evidence="19">
    <location>
        <begin position="420"/>
        <end position="425"/>
    </location>
</feature>
<feature type="helix" evidence="19">
    <location>
        <begin position="427"/>
        <end position="435"/>
    </location>
</feature>
<feature type="strand" evidence="19">
    <location>
        <begin position="440"/>
        <end position="447"/>
    </location>
</feature>
<feature type="strand" evidence="19">
    <location>
        <begin position="449"/>
        <end position="452"/>
    </location>
</feature>
<feature type="helix" evidence="19">
    <location>
        <begin position="453"/>
        <end position="456"/>
    </location>
</feature>
<feature type="helix" evidence="19">
    <location>
        <begin position="458"/>
        <end position="460"/>
    </location>
</feature>
<feature type="turn" evidence="19">
    <location>
        <begin position="466"/>
        <end position="468"/>
    </location>
</feature>
<feature type="helix" evidence="19">
    <location>
        <begin position="475"/>
        <end position="484"/>
    </location>
</feature>
<feature type="helix" evidence="19">
    <location>
        <begin position="490"/>
        <end position="507"/>
    </location>
</feature>
<feature type="strand" evidence="19">
    <location>
        <begin position="509"/>
        <end position="522"/>
    </location>
</feature>
<feature type="strand" evidence="19">
    <location>
        <begin position="533"/>
        <end position="535"/>
    </location>
</feature>
<name>OPPA_BACSU</name>
<protein>
    <recommendedName>
        <fullName evidence="13">Oligopeptide-binding protein OppA</fullName>
    </recommendedName>
    <alternativeName>
        <fullName>Stage 0 sporulation protein KA</fullName>
    </alternativeName>
</protein>
<gene>
    <name evidence="12" type="primary">oppA</name>
    <name evidence="11" type="synonym">spo0KA</name>
    <name type="ordered locus">BSU11430</name>
</gene>
<organism>
    <name type="scientific">Bacillus subtilis (strain 168)</name>
    <dbReference type="NCBI Taxonomy" id="224308"/>
    <lineage>
        <taxon>Bacteria</taxon>
        <taxon>Bacillati</taxon>
        <taxon>Bacillota</taxon>
        <taxon>Bacilli</taxon>
        <taxon>Bacillales</taxon>
        <taxon>Bacillaceae</taxon>
        <taxon>Bacillus</taxon>
    </lineage>
</organism>
<dbReference type="EMBL" id="X56347">
    <property type="protein sequence ID" value="CAA39787.1"/>
    <property type="molecule type" value="Genomic_DNA"/>
</dbReference>
<dbReference type="EMBL" id="M57689">
    <property type="protein sequence ID" value="AAA62687.1"/>
    <property type="molecule type" value="Genomic_DNA"/>
</dbReference>
<dbReference type="EMBL" id="AL009126">
    <property type="protein sequence ID" value="CAB13000.1"/>
    <property type="molecule type" value="Genomic_DNA"/>
</dbReference>
<dbReference type="PIR" id="A38447">
    <property type="entry name" value="A38447"/>
</dbReference>
<dbReference type="RefSeq" id="NP_389025.1">
    <property type="nucleotide sequence ID" value="NC_000964.3"/>
</dbReference>
<dbReference type="RefSeq" id="WP_003232957.1">
    <property type="nucleotide sequence ID" value="NZ_OZ025638.1"/>
</dbReference>
<dbReference type="PDB" id="8ARE">
    <property type="method" value="X-ray"/>
    <property type="resolution" value="1.90 A"/>
    <property type="chains" value="A=21-545"/>
</dbReference>
<dbReference type="PDB" id="8ARN">
    <property type="method" value="X-ray"/>
    <property type="resolution" value="1.50 A"/>
    <property type="chains" value="A/B=21-545"/>
</dbReference>
<dbReference type="PDBsum" id="8ARE"/>
<dbReference type="PDBsum" id="8ARN"/>
<dbReference type="SMR" id="P24141"/>
<dbReference type="FunCoup" id="P24141">
    <property type="interactions" value="295"/>
</dbReference>
<dbReference type="STRING" id="224308.BSU11430"/>
<dbReference type="iPTMnet" id="P24141"/>
<dbReference type="jPOST" id="P24141"/>
<dbReference type="PaxDb" id="224308-BSU11430"/>
<dbReference type="EnsemblBacteria" id="CAB13000">
    <property type="protein sequence ID" value="CAB13000"/>
    <property type="gene ID" value="BSU_11430"/>
</dbReference>
<dbReference type="GeneID" id="936398"/>
<dbReference type="KEGG" id="bsu:BSU11430"/>
<dbReference type="PATRIC" id="fig|224308.43.peg.1194"/>
<dbReference type="eggNOG" id="COG4166">
    <property type="taxonomic scope" value="Bacteria"/>
</dbReference>
<dbReference type="InParanoid" id="P24141"/>
<dbReference type="OrthoDB" id="9801912at2"/>
<dbReference type="BioCyc" id="BSUB:BSU11430-MONOMER"/>
<dbReference type="Proteomes" id="UP000001570">
    <property type="component" value="Chromosome"/>
</dbReference>
<dbReference type="GO" id="GO:0043190">
    <property type="term" value="C:ATP-binding cassette (ABC) transporter complex"/>
    <property type="evidence" value="ECO:0007669"/>
    <property type="project" value="InterPro"/>
</dbReference>
<dbReference type="GO" id="GO:0045121">
    <property type="term" value="C:membrane raft"/>
    <property type="evidence" value="ECO:0007669"/>
    <property type="project" value="UniProtKB-SubCell"/>
</dbReference>
<dbReference type="GO" id="GO:0042597">
    <property type="term" value="C:periplasmic space"/>
    <property type="evidence" value="ECO:0007669"/>
    <property type="project" value="UniProtKB-ARBA"/>
</dbReference>
<dbReference type="GO" id="GO:1904680">
    <property type="term" value="F:peptide transmembrane transporter activity"/>
    <property type="evidence" value="ECO:0000318"/>
    <property type="project" value="GO_Central"/>
</dbReference>
<dbReference type="GO" id="GO:0030420">
    <property type="term" value="P:establishment of competence for transformation"/>
    <property type="evidence" value="ECO:0007669"/>
    <property type="project" value="UniProtKB-KW"/>
</dbReference>
<dbReference type="GO" id="GO:0015833">
    <property type="term" value="P:peptide transport"/>
    <property type="evidence" value="ECO:0000318"/>
    <property type="project" value="GO_Central"/>
</dbReference>
<dbReference type="GO" id="GO:0015031">
    <property type="term" value="P:protein transport"/>
    <property type="evidence" value="ECO:0007669"/>
    <property type="project" value="UniProtKB-KW"/>
</dbReference>
<dbReference type="GO" id="GO:0030435">
    <property type="term" value="P:sporulation resulting in formation of a cellular spore"/>
    <property type="evidence" value="ECO:0007669"/>
    <property type="project" value="UniProtKB-KW"/>
</dbReference>
<dbReference type="CDD" id="cd08504">
    <property type="entry name" value="PBP2_OppA"/>
    <property type="match status" value="1"/>
</dbReference>
<dbReference type="FunFam" id="3.90.76.10:FF:000001">
    <property type="entry name" value="Oligopeptide ABC transporter substrate-binding protein"/>
    <property type="match status" value="1"/>
</dbReference>
<dbReference type="FunFam" id="3.10.105.10:FF:000001">
    <property type="entry name" value="Oligopeptide ABC transporter, oligopeptide-binding protein"/>
    <property type="match status" value="1"/>
</dbReference>
<dbReference type="Gene3D" id="3.90.76.10">
    <property type="entry name" value="Dipeptide-binding Protein, Domain 1"/>
    <property type="match status" value="1"/>
</dbReference>
<dbReference type="Gene3D" id="3.10.105.10">
    <property type="entry name" value="Dipeptide-binding Protein, Domain 3"/>
    <property type="match status" value="1"/>
</dbReference>
<dbReference type="Gene3D" id="3.40.190.10">
    <property type="entry name" value="Periplasmic binding protein-like II"/>
    <property type="match status" value="1"/>
</dbReference>
<dbReference type="InterPro" id="IPR030678">
    <property type="entry name" value="Peptide/Ni-bd"/>
</dbReference>
<dbReference type="InterPro" id="IPR039424">
    <property type="entry name" value="SBP_5"/>
</dbReference>
<dbReference type="InterPro" id="IPR023765">
    <property type="entry name" value="SBP_5_CS"/>
</dbReference>
<dbReference type="InterPro" id="IPR000914">
    <property type="entry name" value="SBP_5_dom"/>
</dbReference>
<dbReference type="PANTHER" id="PTHR30290:SF79">
    <property type="entry name" value="DIPEPTIDE-BINDING PROTEIN DPPE"/>
    <property type="match status" value="1"/>
</dbReference>
<dbReference type="PANTHER" id="PTHR30290">
    <property type="entry name" value="PERIPLASMIC BINDING COMPONENT OF ABC TRANSPORTER"/>
    <property type="match status" value="1"/>
</dbReference>
<dbReference type="Pfam" id="PF00496">
    <property type="entry name" value="SBP_bac_5"/>
    <property type="match status" value="1"/>
</dbReference>
<dbReference type="PIRSF" id="PIRSF002741">
    <property type="entry name" value="MppA"/>
    <property type="match status" value="1"/>
</dbReference>
<dbReference type="SUPFAM" id="SSF53850">
    <property type="entry name" value="Periplasmic binding protein-like II"/>
    <property type="match status" value="1"/>
</dbReference>
<dbReference type="PROSITE" id="PS51257">
    <property type="entry name" value="PROKAR_LIPOPROTEIN"/>
    <property type="match status" value="1"/>
</dbReference>
<dbReference type="PROSITE" id="PS01040">
    <property type="entry name" value="SBP_BACTERIAL_5"/>
    <property type="match status" value="1"/>
</dbReference>
<proteinExistence type="evidence at protein level"/>
<reference key="1">
    <citation type="journal article" date="1991" name="Mol. Microbiol.">
        <title>The oligopeptide transport system of Bacillus subtilis plays a role in the initiation of sporulation.</title>
        <authorList>
            <person name="Perego M."/>
            <person name="Higgins C.F."/>
            <person name="Pearce S.R."/>
            <person name="Gallagher M.P."/>
            <person name="Hoch J.A."/>
        </authorList>
    </citation>
    <scope>NUCLEOTIDE SEQUENCE [GENOMIC DNA]</scope>
    <scope>FUNCTION</scope>
    <scope>SUBUNIT</scope>
    <scope>SUBCELLULAR LOCATION</scope>
    <scope>DISRUPTION PHENOTYPE</scope>
    <source>
        <strain>168</strain>
    </source>
</reference>
<reference key="2">
    <citation type="journal article" date="1991" name="J. Bacteriol.">
        <title>The spo0K locus of Bacillus subtilis is homologous to the oligopeptide permease locus and is required for sporulation and competence.</title>
        <authorList>
            <person name="Rudner D.Z."/>
            <person name="Ledeaux J.R."/>
            <person name="Ireton K."/>
            <person name="Grossman A.D."/>
        </authorList>
    </citation>
    <scope>NUCLEOTIDE SEQUENCE [GENOMIC DNA]</scope>
    <scope>FUNCTION</scope>
    <source>
        <strain>168</strain>
    </source>
</reference>
<reference key="3">
    <citation type="journal article" date="1997" name="Nature">
        <title>The complete genome sequence of the Gram-positive bacterium Bacillus subtilis.</title>
        <authorList>
            <person name="Kunst F."/>
            <person name="Ogasawara N."/>
            <person name="Moszer I."/>
            <person name="Albertini A.M."/>
            <person name="Alloni G."/>
            <person name="Azevedo V."/>
            <person name="Bertero M.G."/>
            <person name="Bessieres P."/>
            <person name="Bolotin A."/>
            <person name="Borchert S."/>
            <person name="Borriss R."/>
            <person name="Boursier L."/>
            <person name="Brans A."/>
            <person name="Braun M."/>
            <person name="Brignell S.C."/>
            <person name="Bron S."/>
            <person name="Brouillet S."/>
            <person name="Bruschi C.V."/>
            <person name="Caldwell B."/>
            <person name="Capuano V."/>
            <person name="Carter N.M."/>
            <person name="Choi S.-K."/>
            <person name="Codani J.-J."/>
            <person name="Connerton I.F."/>
            <person name="Cummings N.J."/>
            <person name="Daniel R.A."/>
            <person name="Denizot F."/>
            <person name="Devine K.M."/>
            <person name="Duesterhoeft A."/>
            <person name="Ehrlich S.D."/>
            <person name="Emmerson P.T."/>
            <person name="Entian K.-D."/>
            <person name="Errington J."/>
            <person name="Fabret C."/>
            <person name="Ferrari E."/>
            <person name="Foulger D."/>
            <person name="Fritz C."/>
            <person name="Fujita M."/>
            <person name="Fujita Y."/>
            <person name="Fuma S."/>
            <person name="Galizzi A."/>
            <person name="Galleron N."/>
            <person name="Ghim S.-Y."/>
            <person name="Glaser P."/>
            <person name="Goffeau A."/>
            <person name="Golightly E.J."/>
            <person name="Grandi G."/>
            <person name="Guiseppi G."/>
            <person name="Guy B.J."/>
            <person name="Haga K."/>
            <person name="Haiech J."/>
            <person name="Harwood C.R."/>
            <person name="Henaut A."/>
            <person name="Hilbert H."/>
            <person name="Holsappel S."/>
            <person name="Hosono S."/>
            <person name="Hullo M.-F."/>
            <person name="Itaya M."/>
            <person name="Jones L.-M."/>
            <person name="Joris B."/>
            <person name="Karamata D."/>
            <person name="Kasahara Y."/>
            <person name="Klaerr-Blanchard M."/>
            <person name="Klein C."/>
            <person name="Kobayashi Y."/>
            <person name="Koetter P."/>
            <person name="Koningstein G."/>
            <person name="Krogh S."/>
            <person name="Kumano M."/>
            <person name="Kurita K."/>
            <person name="Lapidus A."/>
            <person name="Lardinois S."/>
            <person name="Lauber J."/>
            <person name="Lazarevic V."/>
            <person name="Lee S.-M."/>
            <person name="Levine A."/>
            <person name="Liu H."/>
            <person name="Masuda S."/>
            <person name="Mauel C."/>
            <person name="Medigue C."/>
            <person name="Medina N."/>
            <person name="Mellado R.P."/>
            <person name="Mizuno M."/>
            <person name="Moestl D."/>
            <person name="Nakai S."/>
            <person name="Noback M."/>
            <person name="Noone D."/>
            <person name="O'Reilly M."/>
            <person name="Ogawa K."/>
            <person name="Ogiwara A."/>
            <person name="Oudega B."/>
            <person name="Park S.-H."/>
            <person name="Parro V."/>
            <person name="Pohl T.M."/>
            <person name="Portetelle D."/>
            <person name="Porwollik S."/>
            <person name="Prescott A.M."/>
            <person name="Presecan E."/>
            <person name="Pujic P."/>
            <person name="Purnelle B."/>
            <person name="Rapoport G."/>
            <person name="Rey M."/>
            <person name="Reynolds S."/>
            <person name="Rieger M."/>
            <person name="Rivolta C."/>
            <person name="Rocha E."/>
            <person name="Roche B."/>
            <person name="Rose M."/>
            <person name="Sadaie Y."/>
            <person name="Sato T."/>
            <person name="Scanlan E."/>
            <person name="Schleich S."/>
            <person name="Schroeter R."/>
            <person name="Scoffone F."/>
            <person name="Sekiguchi J."/>
            <person name="Sekowska A."/>
            <person name="Seror S.J."/>
            <person name="Serror P."/>
            <person name="Shin B.-S."/>
            <person name="Soldo B."/>
            <person name="Sorokin A."/>
            <person name="Tacconi E."/>
            <person name="Takagi T."/>
            <person name="Takahashi H."/>
            <person name="Takemaru K."/>
            <person name="Takeuchi M."/>
            <person name="Tamakoshi A."/>
            <person name="Tanaka T."/>
            <person name="Terpstra P."/>
            <person name="Tognoni A."/>
            <person name="Tosato V."/>
            <person name="Uchiyama S."/>
            <person name="Vandenbol M."/>
            <person name="Vannier F."/>
            <person name="Vassarotti A."/>
            <person name="Viari A."/>
            <person name="Wambutt R."/>
            <person name="Wedler E."/>
            <person name="Wedler H."/>
            <person name="Weitzenegger T."/>
            <person name="Winters P."/>
            <person name="Wipat A."/>
            <person name="Yamamoto H."/>
            <person name="Yamane K."/>
            <person name="Yasumoto K."/>
            <person name="Yata K."/>
            <person name="Yoshida K."/>
            <person name="Yoshikawa H.-F."/>
            <person name="Zumstein E."/>
            <person name="Yoshikawa H."/>
            <person name="Danchin A."/>
        </authorList>
    </citation>
    <scope>NUCLEOTIDE SEQUENCE [LARGE SCALE GENOMIC DNA]</scope>
    <source>
        <strain>168</strain>
    </source>
</reference>
<reference key="4">
    <citation type="journal article" date="2003" name="Mol. Microbiol.">
        <title>Identification of additional TnrA-regulated genes of Bacillus subtilis associated with a TnrA box.</title>
        <authorList>
            <person name="Yoshida K."/>
            <person name="Yamaguchi H."/>
            <person name="Kinehara M."/>
            <person name="Ohki Y.-H."/>
            <person name="Nakaura Y."/>
            <person name="Fujita Y."/>
        </authorList>
    </citation>
    <scope>INDUCTION BY TNRA</scope>
</reference>
<reference key="5">
    <citation type="journal article" date="2007" name="Mol. Cell. Proteomics">
        <title>The serine/threonine/tyrosine phosphoproteome of the model bacterium Bacillus subtilis.</title>
        <authorList>
            <person name="Macek B."/>
            <person name="Mijakovic I."/>
            <person name="Olsen J.V."/>
            <person name="Gnad F."/>
            <person name="Kumar C."/>
            <person name="Jensen P.R."/>
            <person name="Mann M."/>
        </authorList>
    </citation>
    <scope>PHOSPHORYLATION [LARGE SCALE ANALYSIS] AT THR-470</scope>
    <scope>IDENTIFICATION BY MASS SPECTROMETRY</scope>
    <source>
        <strain>168</strain>
    </source>
</reference>
<reference key="6">
    <citation type="journal article" date="2010" name="Genes Dev.">
        <title>Functional microdomains in bacterial membranes.</title>
        <authorList>
            <person name="Lopez D."/>
            <person name="Kolter R."/>
        </authorList>
    </citation>
    <scope>SUBCELLULAR LOCATION</scope>
    <source>
        <strain>168 / Marburg / ATCC 6051 / DSM 10 / JCM 1465 / NBRC 13719 / NCIMB 3610 / NRRL NRS-744 / VKM B-501</strain>
    </source>
</reference>
<reference key="7">
    <citation type="journal article" date="2012" name="Mol. Microbiol.">
        <title>The biofilm formation defect of a Bacillus subtilis flotillin-defective mutant involves the protease FtsH.</title>
        <authorList>
            <person name="Yepes A."/>
            <person name="Schneider J."/>
            <person name="Mielich B."/>
            <person name="Koch G."/>
            <person name="Garcia-Betancur J.C."/>
            <person name="Ramamurthi K.S."/>
            <person name="Vlamakis H."/>
            <person name="Lopez D."/>
        </authorList>
    </citation>
    <scope>SUBCELLULAR LOCATION</scope>
    <source>
        <strain>168 / Marburg / ATCC 6051 / DSM 10 / JCM 1465 / NBRC 13719 / NCIMB 3610 / NRRL NRS-744 / VKM B-501</strain>
    </source>
</reference>
<reference key="8">
    <citation type="journal article" date="2013" name="Mol. Microbiol.">
        <title>Flotillins functionally organize the bacterial membrane.</title>
        <authorList>
            <person name="Bach J.N."/>
            <person name="Bramkamp M."/>
        </authorList>
    </citation>
    <scope>INTERACTION WITH FLOT</scope>
    <scope>SUBCELLULAR LOCATION</scope>
    <source>
        <strain>168</strain>
    </source>
</reference>
<reference key="9">
    <citation type="journal article" date="2016" name="PLoS Genet.">
        <title>Super Resolution Fluorescence Microscopy and Tracking of Bacterial Flotillin (Reggie) Paralogs Provide Evidence for Defined-Sized Protein Microdomains within the Bacterial Membrane but Absence of Clusters Containing Detergent-Resistant Proteins.</title>
        <authorList>
            <person name="Dempwolff F."/>
            <person name="Schmidt F.K."/>
            <person name="Hervas A.B."/>
            <person name="Stroh A."/>
            <person name="Roesch T.C."/>
            <person name="Riese C.N."/>
            <person name="Dersch S."/>
            <person name="Heimerl T."/>
            <person name="Lucena D."/>
            <person name="Huelsbusch N."/>
            <person name="Stuermer C.A."/>
            <person name="Takeshita N."/>
            <person name="Fischer R."/>
            <person name="Eckhardt B."/>
            <person name="Graumann P.L."/>
        </authorList>
    </citation>
    <scope>SUBCELLULAR LOCATION</scope>
    <source>
        <strain>168 / PY79</strain>
    </source>
</reference>
<reference evidence="17 18" key="10">
    <citation type="journal article" date="2022" name="Microbiology">
        <title>Peptide transport in Bacillus subtilis - structure and specificity in the extracellular solute binding proteins OppA and DppE.</title>
        <authorList>
            <person name="Hughes A.M."/>
            <person name="Darby J.F."/>
            <person name="Dodson E.J."/>
            <person name="Wilson S.J."/>
            <person name="Turkenburg J.P."/>
            <person name="Thomas G.H."/>
            <person name="Wilkinson A.J."/>
        </authorList>
    </citation>
    <scope>X-RAY CRYSTALLOGRAPHY (1.50 ANGSTROMS) OF 21-545 IN COMPLEX WITH AN ENDOGENOUS TETRAPEPTIDE AND WITH PHRE PEPTIDE</scope>
    <scope>FUNCTION</scope>
    <scope>SUBUNIT</scope>
</reference>
<comment type="function">
    <text evidence="4 5 10 13">Part of the ABC transporter complex OppABCDF involved in the uptake of oligopeptides (PubMed:1901616). Plays an important nutritional role (Probable). Binds peptides containing up to five amino acids residues regardless of their sequence, with highest affinity for tetra- and pentapeptides (PubMed:36748525). Binds to the sporulation-promoting peptide PhrE (Ser-Arg-Asn-Val-Thr) (PubMed:36748525). Required for sporulation and genetic competence (PubMed:1899858).</text>
</comment>
<comment type="subunit">
    <text evidence="8 9 14 16">The complex is composed of two ATP-binding proteins (OppD and OppF), two transmembrane proteins (OppB and OppC) and a solute-binding protein (OppA) (Probable). OppA interacts with FloT in detergent-resistant membranes (DRM) (PubMed:23651456). Colocalizes rarely with FloT membrane assemblies (PubMed:27362352).</text>
</comment>
<comment type="subcellular location">
    <subcellularLocation>
        <location evidence="6 7 8 15">Cell membrane</location>
        <topology evidence="1">Lipid-anchor</topology>
    </subcellularLocation>
    <subcellularLocation>
        <location evidence="6 7 8 15">Membrane raft</location>
        <topology evidence="1">Lipid-anchor</topology>
    </subcellularLocation>
    <text evidence="5 6 7 8">Associated with the cell during exponential growth, but is released into the medium in stationary phase (PubMed:1901616). Present in detergent-resistant membrane (DRM) fractions that may be equivalent to eukaryotic membrane rafts; these rafts include proteins involved in signaling, molecule trafficking and protein secretion (PubMed:20713508, PubMed:22882210, PubMed:23651456).</text>
</comment>
<comment type="induction">
    <text evidence="2">Positively regulated by TnrA under nitrogen-limited conditions.</text>
</comment>
<comment type="disruption phenotype">
    <text evidence="5">Inactivation of the gene results in a sporulation-defective phenotype (PubMed:1901616). Disruption confers resistance to bialaphos (PubMed:1901616).</text>
</comment>
<comment type="similarity">
    <text evidence="13">Belongs to the bacterial solute-binding protein 5 family.</text>
</comment>
<keyword id="KW-0002">3D-structure</keyword>
<keyword id="KW-1003">Cell membrane</keyword>
<keyword id="KW-0178">Competence</keyword>
<keyword id="KW-0449">Lipoprotein</keyword>
<keyword id="KW-0472">Membrane</keyword>
<keyword id="KW-0564">Palmitate</keyword>
<keyword id="KW-0571">Peptide transport</keyword>
<keyword id="KW-0597">Phosphoprotein</keyword>
<keyword id="KW-0653">Protein transport</keyword>
<keyword id="KW-1185">Reference proteome</keyword>
<keyword id="KW-0732">Signal</keyword>
<keyword id="KW-0749">Sporulation</keyword>
<keyword id="KW-0813">Transport</keyword>
<accession>P24141</accession>
<accession>P23399</accession>
<evidence type="ECO:0000255" key="1">
    <source>
        <dbReference type="PROSITE-ProRule" id="PRU00303"/>
    </source>
</evidence>
<evidence type="ECO:0000269" key="2">
    <source>
    </source>
</evidence>
<evidence type="ECO:0000269" key="3">
    <source>
    </source>
</evidence>
<evidence type="ECO:0000269" key="4">
    <source>
    </source>
</evidence>
<evidence type="ECO:0000269" key="5">
    <source>
    </source>
</evidence>
<evidence type="ECO:0000269" key="6">
    <source>
    </source>
</evidence>
<evidence type="ECO:0000269" key="7">
    <source>
    </source>
</evidence>
<evidence type="ECO:0000269" key="8">
    <source>
    </source>
</evidence>
<evidence type="ECO:0000269" key="9">
    <source>
    </source>
</evidence>
<evidence type="ECO:0000269" key="10">
    <source>
    </source>
</evidence>
<evidence type="ECO:0000303" key="11">
    <source>
    </source>
</evidence>
<evidence type="ECO:0000303" key="12">
    <source>
    </source>
</evidence>
<evidence type="ECO:0000305" key="13"/>
<evidence type="ECO:0000305" key="14">
    <source>
    </source>
</evidence>
<evidence type="ECO:0000305" key="15">
    <source>
    </source>
</evidence>
<evidence type="ECO:0000305" key="16">
    <source>
    </source>
</evidence>
<evidence type="ECO:0007744" key="17">
    <source>
        <dbReference type="PDB" id="8ARE"/>
    </source>
</evidence>
<evidence type="ECO:0007744" key="18">
    <source>
        <dbReference type="PDB" id="8ARN"/>
    </source>
</evidence>
<evidence type="ECO:0007829" key="19">
    <source>
        <dbReference type="PDB" id="8ARN"/>
    </source>
</evidence>